<accession>Q8EWZ1</accession>
<proteinExistence type="inferred from homology"/>
<comment type="function">
    <text evidence="1">F(1)F(0) ATP synthase produces ATP from ADP in the presence of a proton or sodium gradient. F-type ATPases consist of two structural domains, F(1) containing the extramembraneous catalytic core and F(0) containing the membrane proton channel, linked together by a central stalk and a peripheral stalk. During catalysis, ATP synthesis in the catalytic domain of F(1) is coupled via a rotary mechanism of the central stalk subunits to proton translocation.</text>
</comment>
<comment type="function">
    <text evidence="1">This protein is part of the stalk that links CF(0) to CF(1). It either transmits conformational changes from CF(0) to CF(1) or is implicated in proton conduction.</text>
</comment>
<comment type="subunit">
    <text evidence="1">F-type ATPases have 2 components, F(1) - the catalytic core - and F(0) - the membrane proton channel. F(1) has five subunits: alpha(3), beta(3), gamma(1), delta(1), epsilon(1). F(0) has three main subunits: a(1), b(2) and c(10-14). The alpha and beta chains form an alternating ring which encloses part of the gamma chain. F(1) is attached to F(0) by a central stalk formed by the gamma and epsilon chains, while a peripheral stalk is formed by the delta and b chains.</text>
</comment>
<comment type="subcellular location">
    <subcellularLocation>
        <location evidence="1">Cell membrane</location>
        <topology evidence="1">Peripheral membrane protein</topology>
    </subcellularLocation>
</comment>
<comment type="similarity">
    <text evidence="1">Belongs to the ATPase delta chain family.</text>
</comment>
<organism>
    <name type="scientific">Malacoplasma penetrans (strain HF-2)</name>
    <name type="common">Mycoplasma penetrans</name>
    <dbReference type="NCBI Taxonomy" id="272633"/>
    <lineage>
        <taxon>Bacteria</taxon>
        <taxon>Bacillati</taxon>
        <taxon>Mycoplasmatota</taxon>
        <taxon>Mycoplasmoidales</taxon>
        <taxon>Mycoplasmoidaceae</taxon>
        <taxon>Malacoplasma</taxon>
    </lineage>
</organism>
<sequence>MEEKNHIDHYANALYSIWLELDKKNKIIFTSSAKDIYFSLKNNYEMVHIIDSNIISKEEKTKILNKIFFDLSKSISNIYLKNFLFVLNDNNFFKRILEIFISFFQKLDEHQNFLFIRIYSPFVVEKKLLEKIEHLFSIKTGKRVRYENIIDKSLIGGMKIMFGNDVYDYSIKGKIDQIKWNIENNKEV</sequence>
<gene>
    <name evidence="1" type="primary">atpH</name>
    <name type="ordered locus">MYPE590</name>
</gene>
<feature type="chain" id="PRO_1000184758" description="ATP synthase subunit delta">
    <location>
        <begin position="1"/>
        <end position="188"/>
    </location>
</feature>
<dbReference type="EMBL" id="BA000026">
    <property type="protein sequence ID" value="BAC43849.1"/>
    <property type="molecule type" value="Genomic_DNA"/>
</dbReference>
<dbReference type="RefSeq" id="WP_011076885.1">
    <property type="nucleotide sequence ID" value="NC_004432.1"/>
</dbReference>
<dbReference type="SMR" id="Q8EWZ1"/>
<dbReference type="FunCoup" id="Q8EWZ1">
    <property type="interactions" value="236"/>
</dbReference>
<dbReference type="STRING" id="272633.gene:10731150"/>
<dbReference type="KEGG" id="mpe:MYPE590"/>
<dbReference type="eggNOG" id="COG0712">
    <property type="taxonomic scope" value="Bacteria"/>
</dbReference>
<dbReference type="HOGENOM" id="CLU_085114_4_2_14"/>
<dbReference type="InParanoid" id="Q8EWZ1"/>
<dbReference type="Proteomes" id="UP000002522">
    <property type="component" value="Chromosome"/>
</dbReference>
<dbReference type="GO" id="GO:0005886">
    <property type="term" value="C:plasma membrane"/>
    <property type="evidence" value="ECO:0007669"/>
    <property type="project" value="UniProtKB-SubCell"/>
</dbReference>
<dbReference type="GO" id="GO:0045259">
    <property type="term" value="C:proton-transporting ATP synthase complex"/>
    <property type="evidence" value="ECO:0007669"/>
    <property type="project" value="UniProtKB-KW"/>
</dbReference>
<dbReference type="GO" id="GO:0046933">
    <property type="term" value="F:proton-transporting ATP synthase activity, rotational mechanism"/>
    <property type="evidence" value="ECO:0007669"/>
    <property type="project" value="UniProtKB-UniRule"/>
</dbReference>
<dbReference type="Gene3D" id="1.10.520.20">
    <property type="entry name" value="N-terminal domain of the delta subunit of the F1F0-ATP synthase"/>
    <property type="match status" value="1"/>
</dbReference>
<dbReference type="HAMAP" id="MF_01416">
    <property type="entry name" value="ATP_synth_delta_bact"/>
    <property type="match status" value="1"/>
</dbReference>
<dbReference type="InterPro" id="IPR026015">
    <property type="entry name" value="ATP_synth_OSCP/delta_N_sf"/>
</dbReference>
<dbReference type="InterPro" id="IPR000711">
    <property type="entry name" value="ATPase_OSCP/dsu"/>
</dbReference>
<dbReference type="NCBIfam" id="TIGR01145">
    <property type="entry name" value="ATP_synt_delta"/>
    <property type="match status" value="1"/>
</dbReference>
<dbReference type="PANTHER" id="PTHR11910">
    <property type="entry name" value="ATP SYNTHASE DELTA CHAIN"/>
    <property type="match status" value="1"/>
</dbReference>
<dbReference type="Pfam" id="PF00213">
    <property type="entry name" value="OSCP"/>
    <property type="match status" value="1"/>
</dbReference>
<dbReference type="PRINTS" id="PR00125">
    <property type="entry name" value="ATPASEDELTA"/>
</dbReference>
<dbReference type="SUPFAM" id="SSF47928">
    <property type="entry name" value="N-terminal domain of the delta subunit of the F1F0-ATP synthase"/>
    <property type="match status" value="1"/>
</dbReference>
<keyword id="KW-0066">ATP synthesis</keyword>
<keyword id="KW-1003">Cell membrane</keyword>
<keyword id="KW-0139">CF(1)</keyword>
<keyword id="KW-0375">Hydrogen ion transport</keyword>
<keyword id="KW-0406">Ion transport</keyword>
<keyword id="KW-0472">Membrane</keyword>
<keyword id="KW-1185">Reference proteome</keyword>
<keyword id="KW-0813">Transport</keyword>
<evidence type="ECO:0000255" key="1">
    <source>
        <dbReference type="HAMAP-Rule" id="MF_01416"/>
    </source>
</evidence>
<protein>
    <recommendedName>
        <fullName evidence="1">ATP synthase subunit delta</fullName>
    </recommendedName>
    <alternativeName>
        <fullName evidence="1">ATP synthase F(1) sector subunit delta</fullName>
    </alternativeName>
    <alternativeName>
        <fullName evidence="1">F-type ATPase subunit delta</fullName>
        <shortName evidence="1">F-ATPase subunit delta</shortName>
    </alternativeName>
</protein>
<name>ATPD_MALP2</name>
<reference key="1">
    <citation type="journal article" date="2002" name="Nucleic Acids Res.">
        <title>The complete genomic sequence of Mycoplasma penetrans, an intracellular bacterial pathogen in humans.</title>
        <authorList>
            <person name="Sasaki Y."/>
            <person name="Ishikawa J."/>
            <person name="Yamashita A."/>
            <person name="Oshima K."/>
            <person name="Kenri T."/>
            <person name="Furuya K."/>
            <person name="Yoshino C."/>
            <person name="Horino A."/>
            <person name="Shiba T."/>
            <person name="Sasaki T."/>
            <person name="Hattori M."/>
        </authorList>
    </citation>
    <scope>NUCLEOTIDE SEQUENCE [LARGE SCALE GENOMIC DNA]</scope>
    <source>
        <strain>HF-2</strain>
    </source>
</reference>